<evidence type="ECO:0000255" key="1">
    <source>
        <dbReference type="HAMAP-Rule" id="MF_01820"/>
    </source>
</evidence>
<evidence type="ECO:0000255" key="2">
    <source>
        <dbReference type="PROSITE-ProRule" id="PRU01058"/>
    </source>
</evidence>
<feature type="chain" id="PRO_1000188049" description="Small ribosomal subunit biogenesis GTPase RsgA">
    <location>
        <begin position="1"/>
        <end position="292"/>
    </location>
</feature>
<feature type="domain" description="CP-type G" evidence="2">
    <location>
        <begin position="64"/>
        <end position="221"/>
    </location>
</feature>
<feature type="binding site" evidence="1">
    <location>
        <begin position="113"/>
        <end position="116"/>
    </location>
    <ligand>
        <name>GTP</name>
        <dbReference type="ChEBI" id="CHEBI:37565"/>
    </ligand>
</feature>
<feature type="binding site" evidence="1">
    <location>
        <begin position="164"/>
        <end position="172"/>
    </location>
    <ligand>
        <name>GTP</name>
        <dbReference type="ChEBI" id="CHEBI:37565"/>
    </ligand>
</feature>
<feature type="binding site" evidence="1">
    <location>
        <position position="245"/>
    </location>
    <ligand>
        <name>Zn(2+)</name>
        <dbReference type="ChEBI" id="CHEBI:29105"/>
    </ligand>
</feature>
<feature type="binding site" evidence="1">
    <location>
        <position position="250"/>
    </location>
    <ligand>
        <name>Zn(2+)</name>
        <dbReference type="ChEBI" id="CHEBI:29105"/>
    </ligand>
</feature>
<feature type="binding site" evidence="1">
    <location>
        <position position="252"/>
    </location>
    <ligand>
        <name>Zn(2+)</name>
        <dbReference type="ChEBI" id="CHEBI:29105"/>
    </ligand>
</feature>
<feature type="binding site" evidence="1">
    <location>
        <position position="258"/>
    </location>
    <ligand>
        <name>Zn(2+)</name>
        <dbReference type="ChEBI" id="CHEBI:29105"/>
    </ligand>
</feature>
<proteinExistence type="inferred from homology"/>
<accession>C1FSS3</accession>
<protein>
    <recommendedName>
        <fullName evidence="1">Small ribosomal subunit biogenesis GTPase RsgA</fullName>
        <ecNumber evidence="1">3.6.1.-</ecNumber>
    </recommendedName>
</protein>
<comment type="function">
    <text evidence="1">One of several proteins that assist in the late maturation steps of the functional core of the 30S ribosomal subunit. Helps release RbfA from mature subunits. May play a role in the assembly of ribosomal proteins into the subunit. Circularly permuted GTPase that catalyzes slow GTP hydrolysis, GTPase activity is stimulated by the 30S ribosomal subunit.</text>
</comment>
<comment type="cofactor">
    <cofactor evidence="1">
        <name>Zn(2+)</name>
        <dbReference type="ChEBI" id="CHEBI:29105"/>
    </cofactor>
    <text evidence="1">Binds 1 zinc ion per subunit.</text>
</comment>
<comment type="subunit">
    <text evidence="1">Monomer. Associates with 30S ribosomal subunit, binds 16S rRNA.</text>
</comment>
<comment type="subcellular location">
    <subcellularLocation>
        <location evidence="1">Cytoplasm</location>
    </subcellularLocation>
</comment>
<comment type="similarity">
    <text evidence="1">Belongs to the TRAFAC class YlqF/YawG GTPase family. RsgA subfamily.</text>
</comment>
<dbReference type="EC" id="3.6.1.-" evidence="1"/>
<dbReference type="EMBL" id="CP001581">
    <property type="protein sequence ID" value="ACO85769.1"/>
    <property type="molecule type" value="Genomic_DNA"/>
</dbReference>
<dbReference type="RefSeq" id="WP_003388605.1">
    <property type="nucleotide sequence ID" value="NC_012563.1"/>
</dbReference>
<dbReference type="SMR" id="C1FSS3"/>
<dbReference type="KEGG" id="cby:CLM_2803"/>
<dbReference type="eggNOG" id="COG1162">
    <property type="taxonomic scope" value="Bacteria"/>
</dbReference>
<dbReference type="HOGENOM" id="CLU_033617_2_1_9"/>
<dbReference type="Proteomes" id="UP000001374">
    <property type="component" value="Chromosome"/>
</dbReference>
<dbReference type="GO" id="GO:0005737">
    <property type="term" value="C:cytoplasm"/>
    <property type="evidence" value="ECO:0007669"/>
    <property type="project" value="UniProtKB-SubCell"/>
</dbReference>
<dbReference type="GO" id="GO:0005525">
    <property type="term" value="F:GTP binding"/>
    <property type="evidence" value="ECO:0007669"/>
    <property type="project" value="UniProtKB-UniRule"/>
</dbReference>
<dbReference type="GO" id="GO:0003924">
    <property type="term" value="F:GTPase activity"/>
    <property type="evidence" value="ECO:0007669"/>
    <property type="project" value="UniProtKB-UniRule"/>
</dbReference>
<dbReference type="GO" id="GO:0046872">
    <property type="term" value="F:metal ion binding"/>
    <property type="evidence" value="ECO:0007669"/>
    <property type="project" value="UniProtKB-KW"/>
</dbReference>
<dbReference type="GO" id="GO:0019843">
    <property type="term" value="F:rRNA binding"/>
    <property type="evidence" value="ECO:0007669"/>
    <property type="project" value="UniProtKB-KW"/>
</dbReference>
<dbReference type="GO" id="GO:0042274">
    <property type="term" value="P:ribosomal small subunit biogenesis"/>
    <property type="evidence" value="ECO:0007669"/>
    <property type="project" value="UniProtKB-UniRule"/>
</dbReference>
<dbReference type="CDD" id="cd04466">
    <property type="entry name" value="S1_YloQ_GTPase"/>
    <property type="match status" value="1"/>
</dbReference>
<dbReference type="CDD" id="cd01854">
    <property type="entry name" value="YjeQ_EngC"/>
    <property type="match status" value="1"/>
</dbReference>
<dbReference type="Gene3D" id="2.40.50.140">
    <property type="entry name" value="Nucleic acid-binding proteins"/>
    <property type="match status" value="1"/>
</dbReference>
<dbReference type="Gene3D" id="3.40.50.300">
    <property type="entry name" value="P-loop containing nucleotide triphosphate hydrolases"/>
    <property type="match status" value="1"/>
</dbReference>
<dbReference type="Gene3D" id="1.10.40.50">
    <property type="entry name" value="Probable gtpase engc, domain 3"/>
    <property type="match status" value="1"/>
</dbReference>
<dbReference type="HAMAP" id="MF_01820">
    <property type="entry name" value="GTPase_RsgA"/>
    <property type="match status" value="1"/>
</dbReference>
<dbReference type="InterPro" id="IPR030378">
    <property type="entry name" value="G_CP_dom"/>
</dbReference>
<dbReference type="InterPro" id="IPR012340">
    <property type="entry name" value="NA-bd_OB-fold"/>
</dbReference>
<dbReference type="InterPro" id="IPR027417">
    <property type="entry name" value="P-loop_NTPase"/>
</dbReference>
<dbReference type="InterPro" id="IPR004881">
    <property type="entry name" value="Ribosome_biogen_GTPase_RsgA"/>
</dbReference>
<dbReference type="InterPro" id="IPR010914">
    <property type="entry name" value="RsgA_GTPase_dom"/>
</dbReference>
<dbReference type="InterPro" id="IPR031944">
    <property type="entry name" value="RsgA_N"/>
</dbReference>
<dbReference type="NCBIfam" id="TIGR00157">
    <property type="entry name" value="ribosome small subunit-dependent GTPase A"/>
    <property type="match status" value="1"/>
</dbReference>
<dbReference type="PANTHER" id="PTHR32120">
    <property type="entry name" value="SMALL RIBOSOMAL SUBUNIT BIOGENESIS GTPASE RSGA"/>
    <property type="match status" value="1"/>
</dbReference>
<dbReference type="PANTHER" id="PTHR32120:SF11">
    <property type="entry name" value="SMALL RIBOSOMAL SUBUNIT BIOGENESIS GTPASE RSGA 1, MITOCHONDRIAL-RELATED"/>
    <property type="match status" value="1"/>
</dbReference>
<dbReference type="Pfam" id="PF03193">
    <property type="entry name" value="RsgA_GTPase"/>
    <property type="match status" value="1"/>
</dbReference>
<dbReference type="Pfam" id="PF16745">
    <property type="entry name" value="RsgA_N"/>
    <property type="match status" value="1"/>
</dbReference>
<dbReference type="SUPFAM" id="SSF50249">
    <property type="entry name" value="Nucleic acid-binding proteins"/>
    <property type="match status" value="1"/>
</dbReference>
<dbReference type="SUPFAM" id="SSF52540">
    <property type="entry name" value="P-loop containing nucleoside triphosphate hydrolases"/>
    <property type="match status" value="1"/>
</dbReference>
<dbReference type="PROSITE" id="PS50936">
    <property type="entry name" value="ENGC_GTPASE"/>
    <property type="match status" value="1"/>
</dbReference>
<dbReference type="PROSITE" id="PS51721">
    <property type="entry name" value="G_CP"/>
    <property type="match status" value="1"/>
</dbReference>
<organism>
    <name type="scientific">Clostridium botulinum (strain Kyoto / Type A2)</name>
    <dbReference type="NCBI Taxonomy" id="536232"/>
    <lineage>
        <taxon>Bacteria</taxon>
        <taxon>Bacillati</taxon>
        <taxon>Bacillota</taxon>
        <taxon>Clostridia</taxon>
        <taxon>Eubacteriales</taxon>
        <taxon>Clostridiaceae</taxon>
        <taxon>Clostridium</taxon>
    </lineage>
</organism>
<reference key="1">
    <citation type="submission" date="2008-10" db="EMBL/GenBank/DDBJ databases">
        <title>Genome sequence of Clostridium botulinum A2 Kyoto.</title>
        <authorList>
            <person name="Shrivastava S."/>
            <person name="Brinkac L.M."/>
            <person name="Brown J.L."/>
            <person name="Bruce D."/>
            <person name="Detter C.C."/>
            <person name="Johnson E.A."/>
            <person name="Munk C.A."/>
            <person name="Smith L.A."/>
            <person name="Smith T.J."/>
            <person name="Sutton G."/>
            <person name="Brettin T.S."/>
        </authorList>
    </citation>
    <scope>NUCLEOTIDE SEQUENCE [LARGE SCALE GENOMIC DNA]</scope>
    <source>
        <strain>Kyoto / Type A2</strain>
    </source>
</reference>
<keyword id="KW-0963">Cytoplasm</keyword>
<keyword id="KW-0342">GTP-binding</keyword>
<keyword id="KW-0378">Hydrolase</keyword>
<keyword id="KW-0479">Metal-binding</keyword>
<keyword id="KW-0547">Nucleotide-binding</keyword>
<keyword id="KW-0690">Ribosome biogenesis</keyword>
<keyword id="KW-0694">RNA-binding</keyword>
<keyword id="KW-0699">rRNA-binding</keyword>
<keyword id="KW-0862">Zinc</keyword>
<sequence length="292" mass="33764">MKGTIIKGIGGFYYIKIDNSEEIIECKARGKFRHTELTPMIGDYVEISIDKNNKGAIEKIYERRSELFRPAVANVTQALVVFSFKNPDINIDLLNKFLLLCEYNNLKAIVCFNKMDLVNKEDYKDIISMIEQAGYDIIFLNAKEERNMDIIKKLIKDNVTVFCGPSGVGKSTMLNKIIGKETMITGNISEKLKRGKHTTRHSELIYVDEGLLVDTPGFSSLDINFMEKEDLLHCIPEFRDFIGECKFTGCLHHREPNCAVKKAVEEGHIHKNRYDFYIKTLEEFMNRRKKKW</sequence>
<name>RSGA_CLOBJ</name>
<gene>
    <name evidence="1" type="primary">rsgA</name>
    <name type="ordered locus">CLM_2803</name>
</gene>